<keyword id="KW-1015">Disulfide bond</keyword>
<keyword id="KW-0646">Protease inhibitor</keyword>
<keyword id="KW-0964">Secreted</keyword>
<keyword id="KW-0722">Serine protease inhibitor</keyword>
<keyword id="KW-0732">Signal</keyword>
<organism>
    <name type="scientific">Pseudonaja textilis textilis</name>
    <name type="common">Eastern brown snake</name>
    <dbReference type="NCBI Taxonomy" id="169397"/>
    <lineage>
        <taxon>Eukaryota</taxon>
        <taxon>Metazoa</taxon>
        <taxon>Chordata</taxon>
        <taxon>Craniata</taxon>
        <taxon>Vertebrata</taxon>
        <taxon>Euteleostomi</taxon>
        <taxon>Lepidosauria</taxon>
        <taxon>Squamata</taxon>
        <taxon>Bifurcata</taxon>
        <taxon>Unidentata</taxon>
        <taxon>Episquamata</taxon>
        <taxon>Toxicofera</taxon>
        <taxon>Serpentes</taxon>
        <taxon>Colubroidea</taxon>
        <taxon>Elapidae</taxon>
        <taxon>Hydrophiinae</taxon>
        <taxon>Pseudonaja</taxon>
    </lineage>
</organism>
<evidence type="ECO:0000250" key="1"/>
<evidence type="ECO:0000255" key="2"/>
<evidence type="ECO:0000255" key="3">
    <source>
        <dbReference type="PROSITE-ProRule" id="PRU00031"/>
    </source>
</evidence>
<evidence type="ECO:0000305" key="4"/>
<feature type="signal peptide" evidence="2">
    <location>
        <begin position="1"/>
        <end position="24"/>
    </location>
</feature>
<feature type="chain" id="PRO_5000395639" description="Kunitz-type serine protease inhibitor textilinin-7">
    <location>
        <begin position="25"/>
        <end position="83"/>
    </location>
</feature>
<feature type="domain" description="BPTI/Kunitz inhibitor" evidence="3">
    <location>
        <begin position="31"/>
        <end position="81"/>
    </location>
</feature>
<feature type="disulfide bond" evidence="3">
    <location>
        <begin position="31"/>
        <end position="81"/>
    </location>
</feature>
<feature type="disulfide bond" evidence="3">
    <location>
        <begin position="40"/>
        <end position="64"/>
    </location>
</feature>
<feature type="disulfide bond" evidence="3">
    <location>
        <begin position="56"/>
        <end position="77"/>
    </location>
</feature>
<sequence>MSSGGLLLLLGLLTLWEVLTPVSSKDRPKFCELLPDTGSCEDFTGAFHYSTRDRECIEFIYGGCGGNANNFKTLEECESTCAA</sequence>
<dbReference type="EMBL" id="EU401839">
    <property type="protein sequence ID" value="ACC77788.1"/>
    <property type="molecule type" value="Genomic_DNA"/>
</dbReference>
<dbReference type="SMR" id="B5L5Q1"/>
<dbReference type="MEROPS" id="I02.052"/>
<dbReference type="GO" id="GO:0005615">
    <property type="term" value="C:extracellular space"/>
    <property type="evidence" value="ECO:0007669"/>
    <property type="project" value="TreeGrafter"/>
</dbReference>
<dbReference type="GO" id="GO:0004867">
    <property type="term" value="F:serine-type endopeptidase inhibitor activity"/>
    <property type="evidence" value="ECO:0007669"/>
    <property type="project" value="UniProtKB-KW"/>
</dbReference>
<dbReference type="CDD" id="cd22594">
    <property type="entry name" value="Kunitz_textilinin-like"/>
    <property type="match status" value="1"/>
</dbReference>
<dbReference type="FunFam" id="4.10.410.10:FF:000020">
    <property type="entry name" value="Collagen, type VI, alpha 3"/>
    <property type="match status" value="1"/>
</dbReference>
<dbReference type="Gene3D" id="4.10.410.10">
    <property type="entry name" value="Pancreatic trypsin inhibitor Kunitz domain"/>
    <property type="match status" value="1"/>
</dbReference>
<dbReference type="InterPro" id="IPR002223">
    <property type="entry name" value="Kunitz_BPTI"/>
</dbReference>
<dbReference type="InterPro" id="IPR036880">
    <property type="entry name" value="Kunitz_BPTI_sf"/>
</dbReference>
<dbReference type="InterPro" id="IPR020901">
    <property type="entry name" value="Prtase_inh_Kunz-CS"/>
</dbReference>
<dbReference type="InterPro" id="IPR050098">
    <property type="entry name" value="TFPI/VKTCI-like"/>
</dbReference>
<dbReference type="PANTHER" id="PTHR10083:SF374">
    <property type="entry name" value="BPTI_KUNITZ INHIBITOR DOMAIN-CONTAINING PROTEIN"/>
    <property type="match status" value="1"/>
</dbReference>
<dbReference type="PANTHER" id="PTHR10083">
    <property type="entry name" value="KUNITZ-TYPE PROTEASE INHIBITOR-RELATED"/>
    <property type="match status" value="1"/>
</dbReference>
<dbReference type="Pfam" id="PF00014">
    <property type="entry name" value="Kunitz_BPTI"/>
    <property type="match status" value="1"/>
</dbReference>
<dbReference type="PRINTS" id="PR00759">
    <property type="entry name" value="BASICPTASE"/>
</dbReference>
<dbReference type="SMART" id="SM00131">
    <property type="entry name" value="KU"/>
    <property type="match status" value="1"/>
</dbReference>
<dbReference type="SUPFAM" id="SSF57362">
    <property type="entry name" value="BPTI-like"/>
    <property type="match status" value="1"/>
</dbReference>
<dbReference type="PROSITE" id="PS00280">
    <property type="entry name" value="BPTI_KUNITZ_1"/>
    <property type="match status" value="1"/>
</dbReference>
<dbReference type="PROSITE" id="PS50279">
    <property type="entry name" value="BPTI_KUNITZ_2"/>
    <property type="match status" value="1"/>
</dbReference>
<accession>B5L5Q1</accession>
<proteinExistence type="inferred from homology"/>
<comment type="function">
    <text evidence="1">Serine protease inhibitor.</text>
</comment>
<comment type="subcellular location">
    <subcellularLocation>
        <location evidence="1">Secreted</location>
    </subcellularLocation>
</comment>
<comment type="tissue specificity">
    <text>Expressed by the venom gland.</text>
</comment>
<comment type="similarity">
    <text evidence="4">Belongs to the venom Kunitz-type family.</text>
</comment>
<protein>
    <recommendedName>
        <fullName>Kunitz-type serine protease inhibitor textilinin-7</fullName>
        <shortName>Txln-7</shortName>
    </recommendedName>
</protein>
<name>VKT7_PSETT</name>
<reference key="1">
    <citation type="journal article" date="2008" name="Cell. Mol. Life Sci.">
        <title>Common evolution of waprin and Kunitz-like toxin families in Australian venomous snakes.</title>
        <authorList>
            <person name="St Pierre L."/>
            <person name="Earl S.T."/>
            <person name="Filippovich I."/>
            <person name="Sorokina N."/>
            <person name="Masci P.P."/>
            <person name="De Jersey J."/>
            <person name="Lavin M.F."/>
        </authorList>
    </citation>
    <scope>NUCLEOTIDE SEQUENCE [GENOMIC DNA]</scope>
    <source>
        <tissue>Venom gland</tissue>
    </source>
</reference>